<evidence type="ECO:0000255" key="1">
    <source>
        <dbReference type="HAMAP-Rule" id="MF_00686"/>
    </source>
</evidence>
<proteinExistence type="inferred from homology"/>
<organism>
    <name type="scientific">Escherichia fergusonii (strain ATCC 35469 / DSM 13698 / CCUG 18766 / IAM 14443 / JCM 21226 / LMG 7866 / NBRC 102419 / NCTC 12128 / CDC 0568-73)</name>
    <dbReference type="NCBI Taxonomy" id="585054"/>
    <lineage>
        <taxon>Bacteria</taxon>
        <taxon>Pseudomonadati</taxon>
        <taxon>Pseudomonadota</taxon>
        <taxon>Gammaproteobacteria</taxon>
        <taxon>Enterobacterales</taxon>
        <taxon>Enterobacteriaceae</taxon>
        <taxon>Escherichia</taxon>
    </lineage>
</organism>
<feature type="chain" id="PRO_1000131848" description="Probable Fe(2+)-trafficking protein">
    <location>
        <begin position="1"/>
        <end position="91"/>
    </location>
</feature>
<gene>
    <name evidence="1" type="primary">yggX</name>
    <name type="ordered locus">EFER_2904</name>
</gene>
<keyword id="KW-0408">Iron</keyword>
<name>FETP_ESCF3</name>
<protein>
    <recommendedName>
        <fullName evidence="1">Probable Fe(2+)-trafficking protein</fullName>
    </recommendedName>
</protein>
<comment type="function">
    <text evidence="1">Could be a mediator in iron transactions between iron acquisition and iron-requiring processes, such as synthesis and/or repair of Fe-S clusters in biosynthetic enzymes.</text>
</comment>
<comment type="subunit">
    <text evidence="1">Monomer.</text>
</comment>
<comment type="similarity">
    <text evidence="1">Belongs to the Fe(2+)-trafficking protein family.</text>
</comment>
<sequence>MSRTIFCTFLQREAEGQDFQLYPGELGKRIYNEISKEAWAQWQHKQTMLINEKKLNMMNAEHRKLLEQEMVNFLFEGKEVHIEGYTPEDKK</sequence>
<accession>B7LPT2</accession>
<dbReference type="EMBL" id="CU928158">
    <property type="protein sequence ID" value="CAQ90397.1"/>
    <property type="molecule type" value="Genomic_DNA"/>
</dbReference>
<dbReference type="RefSeq" id="WP_000091700.1">
    <property type="nucleotide sequence ID" value="NC_011740.1"/>
</dbReference>
<dbReference type="SMR" id="B7LPT2"/>
<dbReference type="KEGG" id="efe:EFER_2904"/>
<dbReference type="HOGENOM" id="CLU_170994_0_0_6"/>
<dbReference type="OrthoDB" id="9804318at2"/>
<dbReference type="Proteomes" id="UP000000745">
    <property type="component" value="Chromosome"/>
</dbReference>
<dbReference type="GO" id="GO:0005829">
    <property type="term" value="C:cytosol"/>
    <property type="evidence" value="ECO:0007669"/>
    <property type="project" value="TreeGrafter"/>
</dbReference>
<dbReference type="GO" id="GO:0005506">
    <property type="term" value="F:iron ion binding"/>
    <property type="evidence" value="ECO:0007669"/>
    <property type="project" value="UniProtKB-UniRule"/>
</dbReference>
<dbReference type="GO" id="GO:0034599">
    <property type="term" value="P:cellular response to oxidative stress"/>
    <property type="evidence" value="ECO:0007669"/>
    <property type="project" value="TreeGrafter"/>
</dbReference>
<dbReference type="FunFam" id="1.10.3880.10:FF:000001">
    <property type="entry name" value="Probable Fe(2+)-trafficking protein"/>
    <property type="match status" value="1"/>
</dbReference>
<dbReference type="Gene3D" id="1.10.3880.10">
    <property type="entry name" value="Fe(II) trafficking protein YggX"/>
    <property type="match status" value="1"/>
</dbReference>
<dbReference type="HAMAP" id="MF_00686">
    <property type="entry name" value="Fe_traffic_YggX"/>
    <property type="match status" value="1"/>
</dbReference>
<dbReference type="InterPro" id="IPR007457">
    <property type="entry name" value="Fe_traffick_prot_YggX"/>
</dbReference>
<dbReference type="InterPro" id="IPR036766">
    <property type="entry name" value="Fe_traffick_prot_YggX_sf"/>
</dbReference>
<dbReference type="NCBIfam" id="NF003817">
    <property type="entry name" value="PRK05408.1"/>
    <property type="match status" value="1"/>
</dbReference>
<dbReference type="PANTHER" id="PTHR36965">
    <property type="entry name" value="FE(2+)-TRAFFICKING PROTEIN-RELATED"/>
    <property type="match status" value="1"/>
</dbReference>
<dbReference type="PANTHER" id="PTHR36965:SF1">
    <property type="entry name" value="FE(2+)-TRAFFICKING PROTEIN-RELATED"/>
    <property type="match status" value="1"/>
</dbReference>
<dbReference type="Pfam" id="PF04362">
    <property type="entry name" value="Iron_traffic"/>
    <property type="match status" value="1"/>
</dbReference>
<dbReference type="PIRSF" id="PIRSF029827">
    <property type="entry name" value="Fe_traffic_YggX"/>
    <property type="match status" value="1"/>
</dbReference>
<dbReference type="SUPFAM" id="SSF111148">
    <property type="entry name" value="YggX-like"/>
    <property type="match status" value="1"/>
</dbReference>
<reference key="1">
    <citation type="journal article" date="2009" name="PLoS Genet.">
        <title>Organised genome dynamics in the Escherichia coli species results in highly diverse adaptive paths.</title>
        <authorList>
            <person name="Touchon M."/>
            <person name="Hoede C."/>
            <person name="Tenaillon O."/>
            <person name="Barbe V."/>
            <person name="Baeriswyl S."/>
            <person name="Bidet P."/>
            <person name="Bingen E."/>
            <person name="Bonacorsi S."/>
            <person name="Bouchier C."/>
            <person name="Bouvet O."/>
            <person name="Calteau A."/>
            <person name="Chiapello H."/>
            <person name="Clermont O."/>
            <person name="Cruveiller S."/>
            <person name="Danchin A."/>
            <person name="Diard M."/>
            <person name="Dossat C."/>
            <person name="Karoui M.E."/>
            <person name="Frapy E."/>
            <person name="Garry L."/>
            <person name="Ghigo J.M."/>
            <person name="Gilles A.M."/>
            <person name="Johnson J."/>
            <person name="Le Bouguenec C."/>
            <person name="Lescat M."/>
            <person name="Mangenot S."/>
            <person name="Martinez-Jehanne V."/>
            <person name="Matic I."/>
            <person name="Nassif X."/>
            <person name="Oztas S."/>
            <person name="Petit M.A."/>
            <person name="Pichon C."/>
            <person name="Rouy Z."/>
            <person name="Ruf C.S."/>
            <person name="Schneider D."/>
            <person name="Tourret J."/>
            <person name="Vacherie B."/>
            <person name="Vallenet D."/>
            <person name="Medigue C."/>
            <person name="Rocha E.P.C."/>
            <person name="Denamur E."/>
        </authorList>
    </citation>
    <scope>NUCLEOTIDE SEQUENCE [LARGE SCALE GENOMIC DNA]</scope>
    <source>
        <strain>ATCC 35469 / DSM 13698 / BCRC 15582 / CCUG 18766 / IAM 14443 / JCM 21226 / LMG 7866 / NBRC 102419 / NCTC 12128 / CDC 0568-73</strain>
    </source>
</reference>